<feature type="chain" id="PRO_0000210116" description="mRNA-capping enzyme subunit beta">
    <location>
        <begin position="1"/>
        <end position="556"/>
    </location>
</feature>
<feature type="region of interest" description="Disordered" evidence="3">
    <location>
        <begin position="1"/>
        <end position="28"/>
    </location>
</feature>
<feature type="region of interest" description="Disordered" evidence="3">
    <location>
        <begin position="56"/>
        <end position="217"/>
    </location>
</feature>
<feature type="compositionally biased region" description="Polar residues" evidence="3">
    <location>
        <begin position="63"/>
        <end position="74"/>
    </location>
</feature>
<feature type="compositionally biased region" description="Acidic residues" evidence="3">
    <location>
        <begin position="85"/>
        <end position="96"/>
    </location>
</feature>
<feature type="compositionally biased region" description="Basic and acidic residues" evidence="3">
    <location>
        <begin position="103"/>
        <end position="131"/>
    </location>
</feature>
<feature type="compositionally biased region" description="Basic and acidic residues" evidence="3">
    <location>
        <begin position="139"/>
        <end position="212"/>
    </location>
</feature>
<gene>
    <name type="primary">CET1</name>
    <name type="ordered locus">KLLA0C16049g</name>
</gene>
<reference key="1">
    <citation type="journal article" date="2004" name="Nature">
        <title>Genome evolution in yeasts.</title>
        <authorList>
            <person name="Dujon B."/>
            <person name="Sherman D."/>
            <person name="Fischer G."/>
            <person name="Durrens P."/>
            <person name="Casaregola S."/>
            <person name="Lafontaine I."/>
            <person name="de Montigny J."/>
            <person name="Marck C."/>
            <person name="Neuveglise C."/>
            <person name="Talla E."/>
            <person name="Goffard N."/>
            <person name="Frangeul L."/>
            <person name="Aigle M."/>
            <person name="Anthouard V."/>
            <person name="Babour A."/>
            <person name="Barbe V."/>
            <person name="Barnay S."/>
            <person name="Blanchin S."/>
            <person name="Beckerich J.-M."/>
            <person name="Beyne E."/>
            <person name="Bleykasten C."/>
            <person name="Boisrame A."/>
            <person name="Boyer J."/>
            <person name="Cattolico L."/>
            <person name="Confanioleri F."/>
            <person name="de Daruvar A."/>
            <person name="Despons L."/>
            <person name="Fabre E."/>
            <person name="Fairhead C."/>
            <person name="Ferry-Dumazet H."/>
            <person name="Groppi A."/>
            <person name="Hantraye F."/>
            <person name="Hennequin C."/>
            <person name="Jauniaux N."/>
            <person name="Joyet P."/>
            <person name="Kachouri R."/>
            <person name="Kerrest A."/>
            <person name="Koszul R."/>
            <person name="Lemaire M."/>
            <person name="Lesur I."/>
            <person name="Ma L."/>
            <person name="Muller H."/>
            <person name="Nicaud J.-M."/>
            <person name="Nikolski M."/>
            <person name="Oztas S."/>
            <person name="Ozier-Kalogeropoulos O."/>
            <person name="Pellenz S."/>
            <person name="Potier S."/>
            <person name="Richard G.-F."/>
            <person name="Straub M.-L."/>
            <person name="Suleau A."/>
            <person name="Swennen D."/>
            <person name="Tekaia F."/>
            <person name="Wesolowski-Louvel M."/>
            <person name="Westhof E."/>
            <person name="Wirth B."/>
            <person name="Zeniou-Meyer M."/>
            <person name="Zivanovic Y."/>
            <person name="Bolotin-Fukuhara M."/>
            <person name="Thierry A."/>
            <person name="Bouchier C."/>
            <person name="Caudron B."/>
            <person name="Scarpelli C."/>
            <person name="Gaillardin C."/>
            <person name="Weissenbach J."/>
            <person name="Wincker P."/>
            <person name="Souciet J.-L."/>
        </authorList>
    </citation>
    <scope>NUCLEOTIDE SEQUENCE [LARGE SCALE GENOMIC DNA]</scope>
    <source>
        <strain>ATCC 8585 / CBS 2359 / DSM 70799 / NBRC 1267 / NRRL Y-1140 / WM37</strain>
    </source>
</reference>
<evidence type="ECO:0000250" key="1"/>
<evidence type="ECO:0000250" key="2">
    <source>
        <dbReference type="UniProtKB" id="O13297"/>
    </source>
</evidence>
<evidence type="ECO:0000256" key="3">
    <source>
        <dbReference type="SAM" id="MobiDB-lite"/>
    </source>
</evidence>
<evidence type="ECO:0000305" key="4"/>
<sequence length="556" mass="62743">MKPSRGLSLTDLVNHDDAPPLNNGDNNVKQEEVQAENLATNPASVLAPGPVIVDTLPPVEAPVSTSDTGNTSHTGAAPQTAVTAESDETDTDDEPGEIVFENTKFRFDDEEQQPQKDKLVKGTSSEKKDKQVNAATKEIQLDSKPVKEQSPKTKDEGDIPVEDADKADNKVETQKKENGIKQEVEPVEQDGKKSVEPAKQSKEDSKKEKDIFQQKTSNASVKNNIKKDLKILSELSSSSLPKRYNVPPIWARKWKPTVKALQAIDSSNLKLDDSILGFIPEDDLTKSVQDWIYATLIAVEPELRQFIEVEMKYGLIIDPSTSNRVNPPVSSQCVFTDLDSTMKPDVDERVFDEFNRYIKNLSELNENMGKFNIIDSHASDLSYRVRTHTERPKFLRMTRDVNTGRIAQFIEKRKISQILLYSPKDSYDTKISISLELPVPENDPPEKYKNHTPTGHRLKKRTSYIHNDSCTRFDITRVENKPIRVNNKNEKEPESDTTYEVELEINTPALLNAFDNIQHDSKEYAAIVRTFLNNGTIVRRKLSSLSYDIYKGSNKL</sequence>
<keyword id="KW-0378">Hydrolase</keyword>
<keyword id="KW-0506">mRNA capping</keyword>
<keyword id="KW-0507">mRNA processing</keyword>
<keyword id="KW-0539">Nucleus</keyword>
<keyword id="KW-1185">Reference proteome</keyword>
<protein>
    <recommendedName>
        <fullName>mRNA-capping enzyme subunit beta</fullName>
        <ecNumber evidence="2">3.6.1.74</ecNumber>
    </recommendedName>
    <alternativeName>
        <fullName>mRNA 5'-phosphatase</fullName>
    </alternativeName>
    <alternativeName>
        <fullName>mRNA 5'-triphosphate monophosphatase</fullName>
    </alternativeName>
</protein>
<comment type="function">
    <text evidence="2">First step of mRNA capping. Converts the 5'-triphosphate end of a nascent mRNA chain into a diphosphate end.</text>
</comment>
<comment type="catalytic activity">
    <reaction evidence="2">
        <text>a 5'-end triphospho-ribonucleoside in mRNA + H2O = a 5'-end diphospho-ribonucleoside in mRNA + phosphate + H(+)</text>
        <dbReference type="Rhea" id="RHEA:67004"/>
        <dbReference type="Rhea" id="RHEA-COMP:17164"/>
        <dbReference type="Rhea" id="RHEA-COMP:17165"/>
        <dbReference type="ChEBI" id="CHEBI:15377"/>
        <dbReference type="ChEBI" id="CHEBI:15378"/>
        <dbReference type="ChEBI" id="CHEBI:43474"/>
        <dbReference type="ChEBI" id="CHEBI:167616"/>
        <dbReference type="ChEBI" id="CHEBI:167618"/>
        <dbReference type="EC" id="3.6.1.74"/>
    </reaction>
    <physiologicalReaction direction="left-to-right" evidence="2">
        <dbReference type="Rhea" id="RHEA:67005"/>
    </physiologicalReaction>
</comment>
<comment type="cofactor">
    <cofactor evidence="2">
        <name>Mg(2+)</name>
        <dbReference type="ChEBI" id="CHEBI:18420"/>
    </cofactor>
</comment>
<comment type="subunit">
    <text evidence="2">Heterodimer. The mRNA-capping enzyme is composed of two separate chains alpha and beta, respectively a mRNA guanylyltransferase and an mRNA 5'-triphosphate monophosphatase.</text>
</comment>
<comment type="subcellular location">
    <subcellularLocation>
        <location evidence="1">Nucleus</location>
    </subcellularLocation>
</comment>
<comment type="similarity">
    <text evidence="4">Belongs to the fungal TPase family.</text>
</comment>
<dbReference type="EC" id="3.6.1.74" evidence="2"/>
<dbReference type="EMBL" id="CR382123">
    <property type="protein sequence ID" value="CAH01768.1"/>
    <property type="molecule type" value="Genomic_DNA"/>
</dbReference>
<dbReference type="RefSeq" id="XP_452917.1">
    <property type="nucleotide sequence ID" value="XM_452917.1"/>
</dbReference>
<dbReference type="SMR" id="Q6CT22"/>
<dbReference type="FunCoup" id="Q6CT22">
    <property type="interactions" value="87"/>
</dbReference>
<dbReference type="STRING" id="284590.Q6CT22"/>
<dbReference type="PaxDb" id="284590-Q6CT22"/>
<dbReference type="KEGG" id="kla:KLLA0_C16049g"/>
<dbReference type="eggNOG" id="ENOG502RZAX">
    <property type="taxonomic scope" value="Eukaryota"/>
</dbReference>
<dbReference type="HOGENOM" id="CLU_037653_0_0_1"/>
<dbReference type="InParanoid" id="Q6CT22"/>
<dbReference type="OMA" id="DWVYATI"/>
<dbReference type="Proteomes" id="UP000000598">
    <property type="component" value="Chromosome C"/>
</dbReference>
<dbReference type="GO" id="GO:0031533">
    <property type="term" value="C:mRNA capping enzyme complex"/>
    <property type="evidence" value="ECO:0007669"/>
    <property type="project" value="TreeGrafter"/>
</dbReference>
<dbReference type="GO" id="GO:0140818">
    <property type="term" value="F:mRNA 5'-triphosphate monophosphatase activity"/>
    <property type="evidence" value="ECO:0007669"/>
    <property type="project" value="RHEA"/>
</dbReference>
<dbReference type="GO" id="GO:0004651">
    <property type="term" value="F:polynucleotide 5'-phosphatase activity"/>
    <property type="evidence" value="ECO:0007669"/>
    <property type="project" value="UniProtKB-EC"/>
</dbReference>
<dbReference type="GO" id="GO:0006370">
    <property type="term" value="P:7-methylguanosine mRNA capping"/>
    <property type="evidence" value="ECO:0007669"/>
    <property type="project" value="UniProtKB-KW"/>
</dbReference>
<dbReference type="CDD" id="cd07470">
    <property type="entry name" value="CYTH-like_mRNA_RTPase"/>
    <property type="match status" value="1"/>
</dbReference>
<dbReference type="Gene3D" id="3.20.100.10">
    <property type="entry name" value="mRNA triphosphatase Cet1-like"/>
    <property type="match status" value="1"/>
</dbReference>
<dbReference type="InterPro" id="IPR040343">
    <property type="entry name" value="Cet1/Ctl1"/>
</dbReference>
<dbReference type="InterPro" id="IPR033469">
    <property type="entry name" value="CYTH-like_dom_sf"/>
</dbReference>
<dbReference type="InterPro" id="IPR004206">
    <property type="entry name" value="mRNA_triPase_Cet1"/>
</dbReference>
<dbReference type="InterPro" id="IPR037009">
    <property type="entry name" value="mRNA_triPase_Cet1_sf"/>
</dbReference>
<dbReference type="PANTHER" id="PTHR28118:SF1">
    <property type="entry name" value="POLYNUCLEOTIDE 5'-TRIPHOSPHATASE CTL1-RELATED"/>
    <property type="match status" value="1"/>
</dbReference>
<dbReference type="PANTHER" id="PTHR28118">
    <property type="entry name" value="POLYNUCLEOTIDE 5'-TRIPHOSPHATASE-RELATED"/>
    <property type="match status" value="1"/>
</dbReference>
<dbReference type="Pfam" id="PF02940">
    <property type="entry name" value="mRNA_triPase"/>
    <property type="match status" value="1"/>
</dbReference>
<dbReference type="SUPFAM" id="SSF55154">
    <property type="entry name" value="CYTH-like phosphatases"/>
    <property type="match status" value="1"/>
</dbReference>
<organism>
    <name type="scientific">Kluyveromyces lactis (strain ATCC 8585 / CBS 2359 / DSM 70799 / NBRC 1267 / NRRL Y-1140 / WM37)</name>
    <name type="common">Yeast</name>
    <name type="synonym">Candida sphaerica</name>
    <dbReference type="NCBI Taxonomy" id="284590"/>
    <lineage>
        <taxon>Eukaryota</taxon>
        <taxon>Fungi</taxon>
        <taxon>Dikarya</taxon>
        <taxon>Ascomycota</taxon>
        <taxon>Saccharomycotina</taxon>
        <taxon>Saccharomycetes</taxon>
        <taxon>Saccharomycetales</taxon>
        <taxon>Saccharomycetaceae</taxon>
        <taxon>Kluyveromyces</taxon>
    </lineage>
</organism>
<name>CET1_KLULA</name>
<proteinExistence type="inferred from homology"/>
<accession>Q6CT22</accession>